<protein>
    <recommendedName>
        <fullName>N-lysine methyltransferase setd6</fullName>
        <ecNumber>2.1.1.-</ecNumber>
    </recommendedName>
    <alternativeName>
        <fullName>SET domain-containing protein 6</fullName>
    </alternativeName>
</protein>
<feature type="chain" id="PRO_0000281892" description="N-lysine methyltransferase setd6">
    <location>
        <begin position="1"/>
        <end position="460"/>
    </location>
</feature>
<feature type="domain" description="SET" evidence="2">
    <location>
        <begin position="28"/>
        <end position="265"/>
    </location>
</feature>
<keyword id="KW-0489">Methyltransferase</keyword>
<keyword id="KW-0539">Nucleus</keyword>
<keyword id="KW-1185">Reference proteome</keyword>
<keyword id="KW-0949">S-adenosyl-L-methionine</keyword>
<keyword id="KW-0808">Transferase</keyword>
<sequence>MATEAKRPKTGDEKSVLEPLNNFLLWCESVQLTLSDKVYLSKEGTAAEYGMLAKEDIEEGHVLFTIPREALLHQGTTKVKKVLEEGKKCLESASGWVPLLLSLMYEYTSSTSHWKPYLSLWPDFRTLDQPMFWSEEECDKLLKGTGIPESVITDLRKLQDEYNSVVLPFMKSHPDLWDPEKHNLELYKSLVAFVMAYSFQEPVEDDDEDEEDDEKKPNLPMMVPMADMLNHISKHNANLEYTPECLKMVSIRRIGKGEEVFNTYGQMANWQLLHMYGFAEPFPNNINETADIKMASVYKAAAQVARSEANQQLLEDKWKMLCEMEVVGEKGVFIFGQSGSLTYHELYTTLKVLCMSSQIFEDFRENEGWEEDDEDDDDKMEQDLSFEGLASLSVEWKRLLCVAATETLDSYNEDVETDRRLMEDQRALAELSSRERRALYVRLGQKNILQRIQQLTKPAS</sequence>
<reference key="1">
    <citation type="submission" date="2003-01" db="EMBL/GenBank/DDBJ databases">
        <authorList>
            <consortium name="NIH - Zebrafish Gene Collection (ZGC) project"/>
        </authorList>
    </citation>
    <scope>NUCLEOTIDE SEQUENCE [LARGE SCALE MRNA]</scope>
    <source>
        <strain>AB</strain>
    </source>
</reference>
<name>SETD6_DANRE</name>
<comment type="function">
    <text evidence="1">Protein-lysine N-methyltransferase.</text>
</comment>
<comment type="subcellular location">
    <subcellularLocation>
        <location evidence="1">Nucleus</location>
    </subcellularLocation>
</comment>
<comment type="similarity">
    <text evidence="2">Belongs to the class V-like SAM-binding methyltransferase superfamily. Histone-lysine methyltransferase family. SETD6 subfamily.</text>
</comment>
<dbReference type="EC" id="2.1.1.-"/>
<dbReference type="EMBL" id="BC044440">
    <property type="protein sequence ID" value="AAH44440.1"/>
    <property type="molecule type" value="mRNA"/>
</dbReference>
<dbReference type="RefSeq" id="NP_955894.1">
    <property type="nucleotide sequence ID" value="NM_199600.1"/>
</dbReference>
<dbReference type="SMR" id="Q803K4"/>
<dbReference type="FunCoup" id="Q803K4">
    <property type="interactions" value="556"/>
</dbReference>
<dbReference type="STRING" id="7955.ENSDARP00000064572"/>
<dbReference type="PaxDb" id="7955-ENSDARP00000064572"/>
<dbReference type="GeneID" id="322348"/>
<dbReference type="KEGG" id="dre:322348"/>
<dbReference type="AGR" id="ZFIN:ZDB-GENE-030131-1067"/>
<dbReference type="CTD" id="79918"/>
<dbReference type="ZFIN" id="ZDB-GENE-030131-1067">
    <property type="gene designation" value="setd6"/>
</dbReference>
<dbReference type="eggNOG" id="KOG1338">
    <property type="taxonomic scope" value="Eukaryota"/>
</dbReference>
<dbReference type="InParanoid" id="Q803K4"/>
<dbReference type="OrthoDB" id="341421at2759"/>
<dbReference type="PhylomeDB" id="Q803K4"/>
<dbReference type="Reactome" id="R-DRE-3214841">
    <property type="pathway name" value="PKMTs methylate histone lysines"/>
</dbReference>
<dbReference type="PRO" id="PR:Q803K4"/>
<dbReference type="Proteomes" id="UP000000437">
    <property type="component" value="Alternate scaffold 25"/>
</dbReference>
<dbReference type="Proteomes" id="UP000000437">
    <property type="component" value="Chromosome 25"/>
</dbReference>
<dbReference type="GO" id="GO:0005634">
    <property type="term" value="C:nucleus"/>
    <property type="evidence" value="ECO:0000250"/>
    <property type="project" value="UniProtKB"/>
</dbReference>
<dbReference type="GO" id="GO:0016279">
    <property type="term" value="F:protein-lysine N-methyltransferase activity"/>
    <property type="evidence" value="ECO:0000250"/>
    <property type="project" value="UniProtKB"/>
</dbReference>
<dbReference type="GO" id="GO:0032088">
    <property type="term" value="P:negative regulation of NF-kappaB transcription factor activity"/>
    <property type="evidence" value="ECO:0000250"/>
    <property type="project" value="UniProtKB"/>
</dbReference>
<dbReference type="GO" id="GO:0018026">
    <property type="term" value="P:peptidyl-lysine monomethylation"/>
    <property type="evidence" value="ECO:0000250"/>
    <property type="project" value="UniProtKB"/>
</dbReference>
<dbReference type="GO" id="GO:0050727">
    <property type="term" value="P:regulation of inflammatory response"/>
    <property type="evidence" value="ECO:0000250"/>
    <property type="project" value="UniProtKB"/>
</dbReference>
<dbReference type="CDD" id="cd19178">
    <property type="entry name" value="SET_SETD6"/>
    <property type="match status" value="1"/>
</dbReference>
<dbReference type="FunFam" id="3.90.1410.10:FF:000013">
    <property type="entry name" value="N-lysine methyltransferase SETD6"/>
    <property type="match status" value="1"/>
</dbReference>
<dbReference type="FunFam" id="3.90.1420.10:FF:000002">
    <property type="entry name" value="N-lysine methyltransferase SETD6"/>
    <property type="match status" value="1"/>
</dbReference>
<dbReference type="Gene3D" id="3.90.1420.10">
    <property type="entry name" value="Rubisco LSMT, substrate-binding domain"/>
    <property type="match status" value="1"/>
</dbReference>
<dbReference type="Gene3D" id="3.90.1410.10">
    <property type="entry name" value="set domain protein methyltransferase, domain 1"/>
    <property type="match status" value="1"/>
</dbReference>
<dbReference type="InterPro" id="IPR011383">
    <property type="entry name" value="N-lys_methylase_SETD6"/>
</dbReference>
<dbReference type="InterPro" id="IPR015353">
    <property type="entry name" value="Rubisco_LSMT_subst-bd"/>
</dbReference>
<dbReference type="InterPro" id="IPR036464">
    <property type="entry name" value="Rubisco_LSMT_subst-bd_sf"/>
</dbReference>
<dbReference type="InterPro" id="IPR001214">
    <property type="entry name" value="SET_dom"/>
</dbReference>
<dbReference type="InterPro" id="IPR046341">
    <property type="entry name" value="SET_dom_sf"/>
</dbReference>
<dbReference type="InterPro" id="IPR050600">
    <property type="entry name" value="SETD3_SETD6_MTase"/>
</dbReference>
<dbReference type="InterPro" id="IPR044430">
    <property type="entry name" value="SETD6_SET"/>
</dbReference>
<dbReference type="PANTHER" id="PTHR13271:SF34">
    <property type="entry name" value="N-LYSINE METHYLTRANSFERASE SETD6"/>
    <property type="match status" value="1"/>
</dbReference>
<dbReference type="PANTHER" id="PTHR13271">
    <property type="entry name" value="UNCHARACTERIZED PUTATIVE METHYLTRANSFERASE"/>
    <property type="match status" value="1"/>
</dbReference>
<dbReference type="Pfam" id="PF09273">
    <property type="entry name" value="Rubis-subs-bind"/>
    <property type="match status" value="1"/>
</dbReference>
<dbReference type="Pfam" id="PF00856">
    <property type="entry name" value="SET"/>
    <property type="match status" value="1"/>
</dbReference>
<dbReference type="PIRSF" id="PIRSF011771">
    <property type="entry name" value="RMS1_SET"/>
    <property type="match status" value="1"/>
</dbReference>
<dbReference type="SUPFAM" id="SSF81822">
    <property type="entry name" value="RuBisCo LSMT C-terminal, substrate-binding domain"/>
    <property type="match status" value="1"/>
</dbReference>
<dbReference type="SUPFAM" id="SSF82199">
    <property type="entry name" value="SET domain"/>
    <property type="match status" value="1"/>
</dbReference>
<dbReference type="PROSITE" id="PS50280">
    <property type="entry name" value="SET"/>
    <property type="match status" value="1"/>
</dbReference>
<accession>Q803K4</accession>
<proteinExistence type="evidence at transcript level"/>
<gene>
    <name type="primary">setd6</name>
    <name type="ORF">zgc:55627</name>
</gene>
<evidence type="ECO:0000250" key="1">
    <source>
        <dbReference type="UniProtKB" id="Q8TBK2"/>
    </source>
</evidence>
<evidence type="ECO:0000255" key="2">
    <source>
        <dbReference type="PROSITE-ProRule" id="PRU00190"/>
    </source>
</evidence>
<organism>
    <name type="scientific">Danio rerio</name>
    <name type="common">Zebrafish</name>
    <name type="synonym">Brachydanio rerio</name>
    <dbReference type="NCBI Taxonomy" id="7955"/>
    <lineage>
        <taxon>Eukaryota</taxon>
        <taxon>Metazoa</taxon>
        <taxon>Chordata</taxon>
        <taxon>Craniata</taxon>
        <taxon>Vertebrata</taxon>
        <taxon>Euteleostomi</taxon>
        <taxon>Actinopterygii</taxon>
        <taxon>Neopterygii</taxon>
        <taxon>Teleostei</taxon>
        <taxon>Ostariophysi</taxon>
        <taxon>Cypriniformes</taxon>
        <taxon>Danionidae</taxon>
        <taxon>Danioninae</taxon>
        <taxon>Danio</taxon>
    </lineage>
</organism>